<gene>
    <name evidence="1" type="primary">groEL</name>
    <name evidence="1" type="synonym">groL</name>
    <name type="ordered locus">PSEEN4460</name>
</gene>
<name>CH60_PSEE4</name>
<accession>Q1I5E2</accession>
<evidence type="ECO:0000255" key="1">
    <source>
        <dbReference type="HAMAP-Rule" id="MF_00600"/>
    </source>
</evidence>
<organism>
    <name type="scientific">Pseudomonas entomophila (strain L48)</name>
    <dbReference type="NCBI Taxonomy" id="384676"/>
    <lineage>
        <taxon>Bacteria</taxon>
        <taxon>Pseudomonadati</taxon>
        <taxon>Pseudomonadota</taxon>
        <taxon>Gammaproteobacteria</taxon>
        <taxon>Pseudomonadales</taxon>
        <taxon>Pseudomonadaceae</taxon>
        <taxon>Pseudomonas</taxon>
    </lineage>
</organism>
<keyword id="KW-0067">ATP-binding</keyword>
<keyword id="KW-0143">Chaperone</keyword>
<keyword id="KW-0963">Cytoplasm</keyword>
<keyword id="KW-0413">Isomerase</keyword>
<keyword id="KW-0547">Nucleotide-binding</keyword>
<keyword id="KW-0346">Stress response</keyword>
<feature type="chain" id="PRO_1000025820" description="Chaperonin GroEL">
    <location>
        <begin position="1"/>
        <end position="546"/>
    </location>
</feature>
<feature type="binding site" evidence="1">
    <location>
        <begin position="30"/>
        <end position="33"/>
    </location>
    <ligand>
        <name>ATP</name>
        <dbReference type="ChEBI" id="CHEBI:30616"/>
    </ligand>
</feature>
<feature type="binding site" evidence="1">
    <location>
        <position position="51"/>
    </location>
    <ligand>
        <name>ATP</name>
        <dbReference type="ChEBI" id="CHEBI:30616"/>
    </ligand>
</feature>
<feature type="binding site" evidence="1">
    <location>
        <begin position="87"/>
        <end position="91"/>
    </location>
    <ligand>
        <name>ATP</name>
        <dbReference type="ChEBI" id="CHEBI:30616"/>
    </ligand>
</feature>
<feature type="binding site" evidence="1">
    <location>
        <position position="415"/>
    </location>
    <ligand>
        <name>ATP</name>
        <dbReference type="ChEBI" id="CHEBI:30616"/>
    </ligand>
</feature>
<feature type="binding site" evidence="1">
    <location>
        <begin position="479"/>
        <end position="481"/>
    </location>
    <ligand>
        <name>ATP</name>
        <dbReference type="ChEBI" id="CHEBI:30616"/>
    </ligand>
</feature>
<feature type="binding site" evidence="1">
    <location>
        <position position="495"/>
    </location>
    <ligand>
        <name>ATP</name>
        <dbReference type="ChEBI" id="CHEBI:30616"/>
    </ligand>
</feature>
<sequence>MAAKDVKFGDSARKKMLVGVNVLADAVKATLGPKGRNVVLAKSFGAPTITKDGVSVAKEIELKDAFENMGAQLVKEVASKANDAAGDGTTTATVLAQAIVNEGLKAVAAGMNPMDLKRGIDKATAAIVAELKNLSKPCADSKAIAQVGTISANSDNSIGEIIAEAMEKVGKEGVITVEEGSGLENELSVVEGMQFDRGYLSPYFVNKPDTMVAELEGPLLLLVDKKISNIRELLPVLEAVAKAGRPLLIVAEDVEGEALATLVVNNMRGIVKVAAVKAPGFGDRRKAMLQDIATLTGGQVISEEIGLSLETATLEHLGNAKRVILSKENTTIIDGAGADGDIEARVKQIRAQIEETSSDYDREKLQERLAKLAGGVAVIKVGAGTEVEMKEKKARVEDALHATRAAVEEGVVPGGGVALVRALAAIADLKGDNEEQNVGIALLRRAVEAPLRQITANAGDEPSVVADKVKQGSGNFGYNAATGEYGDMIEMGILDPAKVTRSALQAAASIGGLMITTEAMVADLPEDKPAAGMPDMGGMGGMGGMM</sequence>
<reference key="1">
    <citation type="journal article" date="2006" name="Nat. Biotechnol.">
        <title>Complete genome sequence of the entomopathogenic and metabolically versatile soil bacterium Pseudomonas entomophila.</title>
        <authorList>
            <person name="Vodovar N."/>
            <person name="Vallenet D."/>
            <person name="Cruveiller S."/>
            <person name="Rouy Z."/>
            <person name="Barbe V."/>
            <person name="Acosta C."/>
            <person name="Cattolico L."/>
            <person name="Jubin C."/>
            <person name="Lajus A."/>
            <person name="Segurens B."/>
            <person name="Vacherie B."/>
            <person name="Wincker P."/>
            <person name="Weissenbach J."/>
            <person name="Lemaitre B."/>
            <person name="Medigue C."/>
            <person name="Boccard F."/>
        </authorList>
    </citation>
    <scope>NUCLEOTIDE SEQUENCE [LARGE SCALE GENOMIC DNA]</scope>
    <source>
        <strain>L48</strain>
    </source>
</reference>
<proteinExistence type="inferred from homology"/>
<dbReference type="EC" id="5.6.1.7" evidence="1"/>
<dbReference type="EMBL" id="CT573326">
    <property type="protein sequence ID" value="CAK17143.1"/>
    <property type="molecule type" value="Genomic_DNA"/>
</dbReference>
<dbReference type="RefSeq" id="WP_011535514.1">
    <property type="nucleotide sequence ID" value="NC_008027.1"/>
</dbReference>
<dbReference type="SMR" id="Q1I5E2"/>
<dbReference type="STRING" id="384676.PSEEN4460"/>
<dbReference type="GeneID" id="32807457"/>
<dbReference type="KEGG" id="pen:PSEEN4460"/>
<dbReference type="eggNOG" id="COG0459">
    <property type="taxonomic scope" value="Bacteria"/>
</dbReference>
<dbReference type="HOGENOM" id="CLU_016503_3_0_6"/>
<dbReference type="OrthoDB" id="9766614at2"/>
<dbReference type="Proteomes" id="UP000000658">
    <property type="component" value="Chromosome"/>
</dbReference>
<dbReference type="GO" id="GO:0005737">
    <property type="term" value="C:cytoplasm"/>
    <property type="evidence" value="ECO:0007669"/>
    <property type="project" value="UniProtKB-SubCell"/>
</dbReference>
<dbReference type="GO" id="GO:0005524">
    <property type="term" value="F:ATP binding"/>
    <property type="evidence" value="ECO:0007669"/>
    <property type="project" value="UniProtKB-UniRule"/>
</dbReference>
<dbReference type="GO" id="GO:0140662">
    <property type="term" value="F:ATP-dependent protein folding chaperone"/>
    <property type="evidence" value="ECO:0007669"/>
    <property type="project" value="InterPro"/>
</dbReference>
<dbReference type="GO" id="GO:0016853">
    <property type="term" value="F:isomerase activity"/>
    <property type="evidence" value="ECO:0007669"/>
    <property type="project" value="UniProtKB-KW"/>
</dbReference>
<dbReference type="GO" id="GO:0051082">
    <property type="term" value="F:unfolded protein binding"/>
    <property type="evidence" value="ECO:0007669"/>
    <property type="project" value="UniProtKB-UniRule"/>
</dbReference>
<dbReference type="GO" id="GO:0042026">
    <property type="term" value="P:protein refolding"/>
    <property type="evidence" value="ECO:0007669"/>
    <property type="project" value="UniProtKB-UniRule"/>
</dbReference>
<dbReference type="CDD" id="cd03344">
    <property type="entry name" value="GroEL"/>
    <property type="match status" value="1"/>
</dbReference>
<dbReference type="FunFam" id="1.10.560.10:FF:000001">
    <property type="entry name" value="60 kDa chaperonin"/>
    <property type="match status" value="1"/>
</dbReference>
<dbReference type="FunFam" id="3.50.7.10:FF:000001">
    <property type="entry name" value="60 kDa chaperonin"/>
    <property type="match status" value="1"/>
</dbReference>
<dbReference type="Gene3D" id="3.50.7.10">
    <property type="entry name" value="GroEL"/>
    <property type="match status" value="1"/>
</dbReference>
<dbReference type="Gene3D" id="1.10.560.10">
    <property type="entry name" value="GroEL-like equatorial domain"/>
    <property type="match status" value="1"/>
</dbReference>
<dbReference type="Gene3D" id="3.30.260.10">
    <property type="entry name" value="TCP-1-like chaperonin intermediate domain"/>
    <property type="match status" value="1"/>
</dbReference>
<dbReference type="HAMAP" id="MF_00600">
    <property type="entry name" value="CH60"/>
    <property type="match status" value="1"/>
</dbReference>
<dbReference type="InterPro" id="IPR018370">
    <property type="entry name" value="Chaperonin_Cpn60_CS"/>
</dbReference>
<dbReference type="InterPro" id="IPR001844">
    <property type="entry name" value="Cpn60/GroEL"/>
</dbReference>
<dbReference type="InterPro" id="IPR002423">
    <property type="entry name" value="Cpn60/GroEL/TCP-1"/>
</dbReference>
<dbReference type="InterPro" id="IPR027409">
    <property type="entry name" value="GroEL-like_apical_dom_sf"/>
</dbReference>
<dbReference type="InterPro" id="IPR027413">
    <property type="entry name" value="GROEL-like_equatorial_sf"/>
</dbReference>
<dbReference type="InterPro" id="IPR027410">
    <property type="entry name" value="TCP-1-like_intermed_sf"/>
</dbReference>
<dbReference type="NCBIfam" id="TIGR02348">
    <property type="entry name" value="GroEL"/>
    <property type="match status" value="1"/>
</dbReference>
<dbReference type="NCBIfam" id="NF000592">
    <property type="entry name" value="PRK00013.1"/>
    <property type="match status" value="1"/>
</dbReference>
<dbReference type="NCBIfam" id="NF009487">
    <property type="entry name" value="PRK12849.1"/>
    <property type="match status" value="1"/>
</dbReference>
<dbReference type="NCBIfam" id="NF009488">
    <property type="entry name" value="PRK12850.1"/>
    <property type="match status" value="1"/>
</dbReference>
<dbReference type="NCBIfam" id="NF009489">
    <property type="entry name" value="PRK12851.1"/>
    <property type="match status" value="1"/>
</dbReference>
<dbReference type="PANTHER" id="PTHR45633">
    <property type="entry name" value="60 KDA HEAT SHOCK PROTEIN, MITOCHONDRIAL"/>
    <property type="match status" value="1"/>
</dbReference>
<dbReference type="Pfam" id="PF00118">
    <property type="entry name" value="Cpn60_TCP1"/>
    <property type="match status" value="1"/>
</dbReference>
<dbReference type="PRINTS" id="PR00298">
    <property type="entry name" value="CHAPERONIN60"/>
</dbReference>
<dbReference type="SUPFAM" id="SSF52029">
    <property type="entry name" value="GroEL apical domain-like"/>
    <property type="match status" value="1"/>
</dbReference>
<dbReference type="SUPFAM" id="SSF48592">
    <property type="entry name" value="GroEL equatorial domain-like"/>
    <property type="match status" value="1"/>
</dbReference>
<dbReference type="SUPFAM" id="SSF54849">
    <property type="entry name" value="GroEL-intermediate domain like"/>
    <property type="match status" value="1"/>
</dbReference>
<dbReference type="PROSITE" id="PS00296">
    <property type="entry name" value="CHAPERONINS_CPN60"/>
    <property type="match status" value="1"/>
</dbReference>
<protein>
    <recommendedName>
        <fullName evidence="1">Chaperonin GroEL</fullName>
        <ecNumber evidence="1">5.6.1.7</ecNumber>
    </recommendedName>
    <alternativeName>
        <fullName evidence="1">60 kDa chaperonin</fullName>
    </alternativeName>
    <alternativeName>
        <fullName evidence="1">Chaperonin-60</fullName>
        <shortName evidence="1">Cpn60</shortName>
    </alternativeName>
</protein>
<comment type="function">
    <text evidence="1">Together with its co-chaperonin GroES, plays an essential role in assisting protein folding. The GroEL-GroES system forms a nano-cage that allows encapsulation of the non-native substrate proteins and provides a physical environment optimized to promote and accelerate protein folding.</text>
</comment>
<comment type="catalytic activity">
    <reaction evidence="1">
        <text>ATP + H2O + a folded polypeptide = ADP + phosphate + an unfolded polypeptide.</text>
        <dbReference type="EC" id="5.6.1.7"/>
    </reaction>
</comment>
<comment type="subunit">
    <text evidence="1">Forms a cylinder of 14 subunits composed of two heptameric rings stacked back-to-back. Interacts with the co-chaperonin GroES.</text>
</comment>
<comment type="subcellular location">
    <subcellularLocation>
        <location evidence="1">Cytoplasm</location>
    </subcellularLocation>
</comment>
<comment type="similarity">
    <text evidence="1">Belongs to the chaperonin (HSP60) family.</text>
</comment>